<name>ORF50_HHV8P</name>
<sequence length="691" mass="73679">MAQDDKGKKLRRSCVESFVGLSDELKAQLYQCVLLINDAYETIYDPSDLNRVVEDVCIRIMKECSKLGALCGLFTDINMFNLFCFFRASRMRTKGAAGYNVPCAEASQGIIRILTERILFCTEKAFLTAACSGVSLPPAICKLLHEIYTEMKAKCLGAWRRLVCNRRPIMILTSSLLKLYNTYDTAGLLSEQSRALCLLVFQPVYLPRIMAPLEIMTKGQLAPENFYSITGSAEKRRPITTGKVTGLSYPGSGLMPESLILPILEPGLLPASMVDLSDVLAKPAVILSAPALSQFVISKPHPNMPHTVSIIPFNPSGTDPAFISTWQAASQNMVYNTSTAPLKPATGSSQTVSVKAVAQGAVITATTVPQAMPARGTGGELPVMSASTPARDQVAACFVAENTGDSPDNPSSFLTSCHPCDPNTVIVAQQFQPPQCVTLLQVTCAPSSTPPPDSTVRAPVVQLPTVVPLPASAFLPALAQPEASGEELPGGHDGDQGVPCRDSTAAATAAEATTPKRKQRSKERSSKKRKALTVPEADTTPSTTTPGTSLGSITTPQDVHATDVATSEGPSEAQPPLLSLPPPLDVDQSLFALLDEAGPETWDVGSPLSPTDDALLSSILQGLYQLDTPPPLRSPSPASFGPESPADIPSPSGGEYTQLQPVRATSATPANEVQESGTLYQLHQWRNYFRD</sequence>
<proteinExistence type="evidence at protein level"/>
<feature type="chain" id="PRO_0000423801" description="Replication and transcription activator">
    <location>
        <begin position="1"/>
        <end position="691"/>
    </location>
</feature>
<feature type="region of interest" description="Disordered" evidence="1">
    <location>
        <begin position="482"/>
        <end position="582"/>
    </location>
</feature>
<feature type="region of interest" description="Disordered" evidence="1">
    <location>
        <begin position="626"/>
        <end position="677"/>
    </location>
</feature>
<feature type="compositionally biased region" description="Low complexity" evidence="1">
    <location>
        <begin position="504"/>
        <end position="513"/>
    </location>
</feature>
<feature type="compositionally biased region" description="Basic residues" evidence="1">
    <location>
        <begin position="515"/>
        <end position="531"/>
    </location>
</feature>
<feature type="compositionally biased region" description="Low complexity" evidence="1">
    <location>
        <begin position="539"/>
        <end position="556"/>
    </location>
</feature>
<feature type="compositionally biased region" description="Polar residues" evidence="1">
    <location>
        <begin position="655"/>
        <end position="677"/>
    </location>
</feature>
<feature type="glycosylation site" description="O-linked (GlcNAc) threonine; by host" evidence="5">
    <location>
        <position position="366"/>
    </location>
</feature>
<feature type="glycosylation site" description="O-linked (GlcNAc) threonine; by host" evidence="5">
    <location>
        <position position="367"/>
    </location>
</feature>
<feature type="mutagenesis site" description="Significantly reduced ability to deplete host SUMO and MYD88." evidence="6 7">
    <original>C</original>
    <variation>S</variation>
    <location>
        <position position="141"/>
    </location>
</feature>
<feature type="mutagenesis site" description="Significantly reduced ability to deplete host SUMO and MYD88." evidence="6 7">
    <original>H</original>
    <variation>L</variation>
    <location>
        <position position="145"/>
    </location>
</feature>
<feature type="mutagenesis site" description="Greatly reduced DNA-binding activity but not completely abolished. About 30-fold induction of the ORF50 promoter in concert with RNF20/40, while the synergistic induction of ORF57 and K2 promoters was much more reduced." evidence="10">
    <original>K</original>
    <variation>E</variation>
    <location>
        <position position="152"/>
    </location>
</feature>
<feature type="mutagenesis site" description="About 70% loss of interaction with host PARP1; when associated with A-367." evidence="5">
    <original>T</original>
    <variation>A</variation>
    <location>
        <position position="366"/>
    </location>
</feature>
<feature type="mutagenesis site" description="About 70% loss of interaction with host PARP1; when associated with A-366." evidence="5">
    <original>T</original>
    <variation>A</variation>
    <location>
        <position position="367"/>
    </location>
</feature>
<evidence type="ECO:0000256" key="1">
    <source>
        <dbReference type="SAM" id="MobiDB-lite"/>
    </source>
</evidence>
<evidence type="ECO:0000269" key="2">
    <source>
    </source>
</evidence>
<evidence type="ECO:0000269" key="3">
    <source>
    </source>
</evidence>
<evidence type="ECO:0000269" key="4">
    <source>
    </source>
</evidence>
<evidence type="ECO:0000269" key="5">
    <source>
    </source>
</evidence>
<evidence type="ECO:0000269" key="6">
    <source>
    </source>
</evidence>
<evidence type="ECO:0000269" key="7">
    <source>
    </source>
</evidence>
<evidence type="ECO:0000269" key="8">
    <source>
    </source>
</evidence>
<evidence type="ECO:0000269" key="9">
    <source>
    </source>
</evidence>
<evidence type="ECO:0000269" key="10">
    <source>
    </source>
</evidence>
<evidence type="ECO:0000303" key="11">
    <source>
    </source>
</evidence>
<evidence type="ECO:0000305" key="12"/>
<organismHost>
    <name type="scientific">Homo sapiens</name>
    <name type="common">Human</name>
    <dbReference type="NCBI Taxonomy" id="9606"/>
</organismHost>
<protein>
    <recommendedName>
        <fullName evidence="11">Replication and transcription activator</fullName>
        <shortName>RTA</shortName>
        <ecNumber evidence="6 7">2.3.2.27</ecNumber>
    </recommendedName>
</protein>
<organism>
    <name type="scientific">Human herpesvirus 8 type P (isolate GK18)</name>
    <name type="common">HHV-8</name>
    <name type="synonym">Kaposi's sarcoma-associated herpesvirus</name>
    <dbReference type="NCBI Taxonomy" id="868565"/>
    <lineage>
        <taxon>Viruses</taxon>
        <taxon>Duplodnaviria</taxon>
        <taxon>Heunggongvirae</taxon>
        <taxon>Peploviricota</taxon>
        <taxon>Herviviricetes</taxon>
        <taxon>Herpesvirales</taxon>
        <taxon>Orthoherpesviridae</taxon>
        <taxon>Gammaherpesvirinae</taxon>
        <taxon>Rhadinovirus</taxon>
        <taxon>Rhadinovirus humangamma8</taxon>
        <taxon>Human herpesvirus 8</taxon>
    </lineage>
</organism>
<dbReference type="EC" id="2.3.2.27" evidence="6 7"/>
<dbReference type="EMBL" id="AF148805">
    <property type="protein sequence ID" value="ABD28900.1"/>
    <property type="molecule type" value="Genomic_DNA"/>
</dbReference>
<dbReference type="RefSeq" id="YP_001129401.1">
    <property type="nucleotide sequence ID" value="NC_009333.1"/>
</dbReference>
<dbReference type="BioGRID" id="1777029">
    <property type="interactions" value="96"/>
</dbReference>
<dbReference type="DNASU" id="4961526"/>
<dbReference type="GeneID" id="4961526"/>
<dbReference type="KEGG" id="vg:4961526"/>
<dbReference type="Proteomes" id="UP000000942">
    <property type="component" value="Segment"/>
</dbReference>
<dbReference type="GO" id="GO:0042025">
    <property type="term" value="C:host cell nucleus"/>
    <property type="evidence" value="ECO:0007669"/>
    <property type="project" value="UniProtKB-SubCell"/>
</dbReference>
<dbReference type="GO" id="GO:0003677">
    <property type="term" value="F:DNA binding"/>
    <property type="evidence" value="ECO:0007669"/>
    <property type="project" value="UniProtKB-KW"/>
</dbReference>
<dbReference type="GO" id="GO:0016740">
    <property type="term" value="F:transferase activity"/>
    <property type="evidence" value="ECO:0007669"/>
    <property type="project" value="UniProtKB-KW"/>
</dbReference>
<dbReference type="GO" id="GO:0039686">
    <property type="term" value="P:bidirectional double-stranded viral DNA replication"/>
    <property type="evidence" value="ECO:0000314"/>
    <property type="project" value="UniProtKB"/>
</dbReference>
<dbReference type="GO" id="GO:0039695">
    <property type="term" value="P:DNA-templated viral transcription"/>
    <property type="evidence" value="ECO:0000314"/>
    <property type="project" value="UniProtKB"/>
</dbReference>
<dbReference type="GO" id="GO:0006355">
    <property type="term" value="P:regulation of DNA-templated transcription"/>
    <property type="evidence" value="ECO:0007669"/>
    <property type="project" value="InterPro"/>
</dbReference>
<dbReference type="InterPro" id="IPR004998">
    <property type="entry name" value="Herpes_TAF50"/>
</dbReference>
<dbReference type="Pfam" id="PF03326">
    <property type="entry name" value="Herpes_TAF50"/>
    <property type="match status" value="1"/>
</dbReference>
<gene>
    <name type="primary">ORF50</name>
</gene>
<reference key="1">
    <citation type="journal article" date="1999" name="J. Virol.">
        <title>Identification of a spliced gene from Kaposi's sarcoma-associated herpesvirus encoding a protein with similarities to latent membrane proteins 1 and 2A of Epstein-Barr virus.</title>
        <authorList>
            <person name="Glenn M."/>
            <person name="Rainbow L."/>
            <person name="Aurade F."/>
            <person name="Davison A."/>
            <person name="Schulz T.F."/>
        </authorList>
    </citation>
    <scope>NUCLEOTIDE SEQUENCE [LARGE SCALE GENOMIC DNA]</scope>
</reference>
<reference key="2">
    <citation type="journal article" date="2006" name="J. Gen. Virol.">
        <title>Kaposi's sarcoma-associated herpesvirus immune modulation: an overview.</title>
        <authorList>
            <person name="Rezaee S.A.R."/>
            <person name="Cunningham C."/>
            <person name="Davison A.J."/>
            <person name="Blackbourn D.J."/>
        </authorList>
    </citation>
    <scope>NUCLEOTIDE SEQUENCE [LARGE SCALE GENOMIC DNA]</scope>
</reference>
<reference key="3">
    <citation type="journal article" date="2004" name="J. Gen. Virol.">
        <title>Functional co-operation between the Kaposi's sarcoma-associated herpesvirus ORF57 and ORF50 regulatory proteins.</title>
        <authorList>
            <person name="Malik P."/>
            <person name="Blackbourn D.J."/>
            <person name="Cheng M.F."/>
            <person name="Hayward G.S."/>
            <person name="Clements J.B."/>
        </authorList>
    </citation>
    <scope>FUNCTION</scope>
    <scope>INTERACTION WITH ORF57</scope>
</reference>
<reference key="4">
    <citation type="journal article" date="2007" name="J. Virol.">
        <title>Kaposi's sarcoma-associated herpesvirus/human herpesvirus 8 ORF50/Rta lytic switch protein functions as a tetramer.</title>
        <authorList>
            <person name="Bu W."/>
            <person name="Carroll K.D."/>
            <person name="Palmeri D."/>
            <person name="Lukac D.M."/>
        </authorList>
    </citation>
    <scope>FUNCTION</scope>
    <scope>SUBUNIT</scope>
</reference>
<reference key="5">
    <citation type="journal article" date="2007" name="J. Virol.">
        <title>Direct interactions of Kaposi's sarcoma-associated herpesvirus/human herpesvirus 8 ORF50/Rta protein with the cellular protein octamer-1 and DNA are critical for specifying transactivation of a delayed-early promoter and stimulating viral reactivation.</title>
        <authorList>
            <person name="Carroll K.D."/>
            <person name="Khadim F."/>
            <person name="Spadavecchia S."/>
            <person name="Palmeri D."/>
            <person name="Lukac D.M."/>
        </authorList>
    </citation>
    <scope>FUNCTION</scope>
    <scope>INTERACTION WITH HOST POU2F1</scope>
</reference>
<reference key="6">
    <citation type="journal article" date="2012" name="J. Biomed. Sci.">
        <title>Suppressive regulation of KSHV RTA with O-GlcNAcylation.</title>
        <authorList>
            <person name="Ko Y.C."/>
            <person name="Tsai W.H."/>
            <person name="Wang P.W."/>
            <person name="Wu I.L."/>
            <person name="Lin S.Y."/>
            <person name="Chen Y.L."/>
            <person name="Chen J.Y."/>
            <person name="Lin S.F."/>
        </authorList>
    </citation>
    <scope>FUNCTION</scope>
    <scope>GLYCOSYLATION AT THR-366 AND THR-367</scope>
    <scope>MUTAGENESIS OF THR-366 AND THR-367</scope>
    <scope>INTERACTION WITH HOST PARP1</scope>
</reference>
<reference key="7">
    <citation type="journal article" date="2013" name="PLoS Pathog.">
        <title>Kaposi's sarcoma-associated herpesvirus K-Rta exhibits SUMO-targeting ubiquitin ligase (STUbL) like activity and is essential for viral reactivation.</title>
        <authorList>
            <person name="Izumiya Y."/>
            <person name="Kobayashi K."/>
            <person name="Kim K.Y."/>
            <person name="Pochampalli M."/>
            <person name="Izumiya C."/>
            <person name="Shevchenko B."/>
            <person name="Wang D.H."/>
            <person name="Huerta S.B."/>
            <person name="Martinez A."/>
            <person name="Campbell M."/>
            <person name="Kung H.J."/>
        </authorList>
    </citation>
    <scope>FUNCTION</scope>
    <scope>CATALYTIC ACTIVITY</scope>
    <scope>SUBCELLULAR LOCATION</scope>
    <scope>MUTAGENESIS OF CYS-141 AND HIS-145</scope>
</reference>
<reference key="8">
    <citation type="journal article" date="2015" name="J. Virol.">
        <title>Kaposi's sarcoma-associated herpesvirus-encoded replication and transcription activator impairs innate immunity via ubiquitin-mediated degradation of myeloid differentiation factor 88.</title>
        <authorList>
            <person name="Zhao Q."/>
            <person name="Liang D."/>
            <person name="Sun R."/>
            <person name="Jia B."/>
            <person name="Xia T."/>
            <person name="Xiao H."/>
            <person name="Lan K."/>
        </authorList>
    </citation>
    <scope>FUNCTION</scope>
    <scope>CATALYTIC ACTIVITY</scope>
    <scope>MUTAGENESIS OF CYS-141 AND HIS-145</scope>
</reference>
<reference key="9">
    <citation type="journal article" date="2017" name="Virology">
        <title>The Itch ubiquitin ligase is required for KSHV RTA induced vFLIP degradation.</title>
        <authorList>
            <person name="Chmura J.C."/>
            <person name="Herold K."/>
            <person name="Ruffin A."/>
            <person name="Atuobi T."/>
            <person name="Fabiyi Y."/>
            <person name="Mitchell A.E."/>
            <person name="Choi Y.B."/>
            <person name="Ehrlich E.S."/>
        </authorList>
    </citation>
    <scope>FUNCTION</scope>
    <scope>INTERACTION WITH HOST ITCH</scope>
</reference>
<reference key="10">
    <citation type="journal article" date="2022" name="PLoS Pathog.">
        <title>KSHV RTA antagonizes SMC5/6 complex-induced viral chromatin compaction by hijacking the ubiquitin-proteasome system.</title>
        <authorList>
            <person name="Han C."/>
            <person name="Zhang D."/>
            <person name="Gui C."/>
            <person name="Huang L."/>
            <person name="Chang S."/>
            <person name="Dong L."/>
            <person name="Bai L."/>
            <person name="Wu S."/>
            <person name="Lan K."/>
        </authorList>
    </citation>
    <scope>FUNCTION</scope>
    <scope>INTERACTION WITH HOST SMC5 AND SMC6</scope>
    <scope>SUBCELLULAR LOCATION</scope>
</reference>
<reference key="11">
    <citation type="journal article" date="2023" name="J. Virol.">
        <title>KSHV RTA utilizes the host E3 ubiquitin ligase complex RNF20/40 to drive lytic reactivation.</title>
        <authorList>
            <person name="Spires L.M."/>
            <person name="Wind E."/>
            <person name="Papp B."/>
            <person name="Toth Z."/>
        </authorList>
    </citation>
    <scope>FUNCTION</scope>
    <scope>INTERACTION WITH HOST RNF20 AND RNF40</scope>
    <scope>MUTAGENESIS OF LYS-152</scope>
</reference>
<keyword id="KW-0010">Activator</keyword>
<keyword id="KW-0238">DNA-binding</keyword>
<keyword id="KW-0244">Early protein</keyword>
<keyword id="KW-0325">Glycoprotein</keyword>
<keyword id="KW-1048">Host nucleus</keyword>
<keyword id="KW-1185">Reference proteome</keyword>
<keyword id="KW-0804">Transcription</keyword>
<keyword id="KW-0805">Transcription regulation</keyword>
<keyword id="KW-0808">Transferase</keyword>
<accession>F5HCV3</accession>
<comment type="function">
    <text evidence="2 3 4 5 6 7 8 9 10">Transcriptional transactivator that is necessary and sufficient for reactivation of the virus from latency (PubMed:17392367, PubMed:22300411). Acts post-transcriptionally and transcriptionally to regulate viral lytic gene expression and synergistically with ORF57 activates certain early and late viral promoters including its own promoter (PubMed:15269354). Autostimulation on its promoter is mediated by the formation of a ternary complex between ORF50 and the cellular components HGMB1 and POU2F1 (PubMed:17537858). Also possesses a bimodal activity in targeting proteins for degradation through using its own E3 ligase activity or by stabilizing and chaperoning host E3 ligases (PubMed:23990779, PubMed:27912080, PubMed:37888983). These activities help to subvert the host innate and adaptive immune responses while also modulating the host transcriptome and protein landscape to promote virus production. For instance, targets the host SMC5/6 complex for ubiquitination and subsequent degradation through the ubiquitin-proteasome during reactivation while during latency, host SMC5/6 complex binds to the viral episome and condenses viral chromatin, creating a repressive chromatin structure to silence genome transcription (PubMed:35914008). Hijacks the cellular E3 ligase complex RNF20/40 to increase the level of transcriptionally active RNA polymerase II on viral gene promoters thereby facilitating lytic gene expression (PubMed:37888983). Acts as a SUMO-targeting ubiquitin ligase and affects general sumoylation of cellular proteins (PubMed:23990779). Promotes the polyubiquitination and subsequent degradation of host MYD88 and thereby inhibits MYD88-mediated TLR4 signaling (PubMed:25320320). Induces the degradation of vFLIP/ORF71 together with cellular ubiquitin ligase ITCH to prevent vFLIP-induced NF-kappa-B signaling (PubMed:25320320).</text>
</comment>
<comment type="catalytic activity">
    <reaction evidence="6 7">
        <text>S-ubiquitinyl-[E2 ubiquitin-conjugating enzyme]-L-cysteine + [acceptor protein]-L-lysine = [E2 ubiquitin-conjugating enzyme]-L-cysteine + N(6)-ubiquitinyl-[acceptor protein]-L-lysine.</text>
        <dbReference type="EC" id="2.3.2.27"/>
    </reaction>
</comment>
<comment type="subunit">
    <text evidence="2 3">Homotetramer (PubMed:17392367). Interacts with KTA/ORF57 (PubMed:15269354). Interacts with host PARP1; this interaction negatively regulates RTA/ORF50 transactivation activity (PubMed:22300411). Interacts with host SMC5 and SMC6; these interactions remove the repressive chromatin structure to allow viral reactivation. Interacts with host POU2F1; this interaction enhances RTA/ORF50-mediated transactivation of several viral promoters including K-bZIP promoter.</text>
</comment>
<comment type="subcellular location">
    <subcellularLocation>
        <location evidence="6 9">Host nucleus</location>
    </subcellularLocation>
</comment>
<comment type="similarity">
    <text evidence="12">Belongs to the herpesviridae TAF50 family.</text>
</comment>